<feature type="chain" id="PRO_0000192197" description="33 kDa chaperonin">
    <location>
        <begin position="1"/>
        <end position="292"/>
    </location>
</feature>
<feature type="disulfide bond" description="Redox-active" evidence="1">
    <location>
        <begin position="230"/>
        <end position="232"/>
    </location>
</feature>
<feature type="disulfide bond" description="Redox-active" evidence="1">
    <location>
        <begin position="263"/>
        <end position="266"/>
    </location>
</feature>
<gene>
    <name evidence="1" type="primary">hslO</name>
    <name type="ordered locus">STM3498</name>
</gene>
<evidence type="ECO:0000255" key="1">
    <source>
        <dbReference type="HAMAP-Rule" id="MF_00117"/>
    </source>
</evidence>
<evidence type="ECO:0000305" key="2"/>
<name>HSLO_SALTY</name>
<organism>
    <name type="scientific">Salmonella typhimurium (strain LT2 / SGSC1412 / ATCC 700720)</name>
    <dbReference type="NCBI Taxonomy" id="99287"/>
    <lineage>
        <taxon>Bacteria</taxon>
        <taxon>Pseudomonadati</taxon>
        <taxon>Pseudomonadota</taxon>
        <taxon>Gammaproteobacteria</taxon>
        <taxon>Enterobacterales</taxon>
        <taxon>Enterobacteriaceae</taxon>
        <taxon>Salmonella</taxon>
    </lineage>
</organism>
<keyword id="KW-0143">Chaperone</keyword>
<keyword id="KW-0963">Cytoplasm</keyword>
<keyword id="KW-1015">Disulfide bond</keyword>
<keyword id="KW-0676">Redox-active center</keyword>
<keyword id="KW-1185">Reference proteome</keyword>
<keyword id="KW-0862">Zinc</keyword>
<accession>Q8ZLJ4</accession>
<reference key="1">
    <citation type="journal article" date="2001" name="Nature">
        <title>Complete genome sequence of Salmonella enterica serovar Typhimurium LT2.</title>
        <authorList>
            <person name="McClelland M."/>
            <person name="Sanderson K.E."/>
            <person name="Spieth J."/>
            <person name="Clifton S.W."/>
            <person name="Latreille P."/>
            <person name="Courtney L."/>
            <person name="Porwollik S."/>
            <person name="Ali J."/>
            <person name="Dante M."/>
            <person name="Du F."/>
            <person name="Hou S."/>
            <person name="Layman D."/>
            <person name="Leonard S."/>
            <person name="Nguyen C."/>
            <person name="Scott K."/>
            <person name="Holmes A."/>
            <person name="Grewal N."/>
            <person name="Mulvaney E."/>
            <person name="Ryan E."/>
            <person name="Sun H."/>
            <person name="Florea L."/>
            <person name="Miller W."/>
            <person name="Stoneking T."/>
            <person name="Nhan M."/>
            <person name="Waterston R."/>
            <person name="Wilson R.K."/>
        </authorList>
    </citation>
    <scope>NUCLEOTIDE SEQUENCE [LARGE SCALE GENOMIC DNA]</scope>
    <source>
        <strain>LT2 / SGSC1412 / ATCC 700720</strain>
    </source>
</reference>
<proteinExistence type="inferred from homology"/>
<protein>
    <recommendedName>
        <fullName evidence="1">33 kDa chaperonin</fullName>
    </recommendedName>
    <alternativeName>
        <fullName evidence="1">Heat shock protein 33 homolog</fullName>
        <shortName evidence="1">HSP33</shortName>
    </alternativeName>
</protein>
<sequence>MPQHDQLHRYLFENFAVRGELVTVSETLQQILDNHNYPQPVKTVLAELLVATSLLTATLKFAGDITVQLQGDGPLSLAVINGNNQQQMRGVARVQGDIPDNADLKTLVGNGYLVITITPEEGERYQGVVGLEGDTLAACLEDYFLRSEQLPTRLFIRTGDVDGKPAAGGMLLQVMPAQNAQAEDFDHLAMLTETIKSEELLTLPANDVLWRLYHEEEVTLYDPQNVEFKCTCSRERCAGALKTLPDEEVDSILAEEGEIDMHCDYCGNHYLFNAMDIAEIRNNASPADPQVH</sequence>
<comment type="function">
    <text evidence="1">Redox regulated molecular chaperone. Protects both thermally unfolding and oxidatively damaged proteins from irreversible aggregation. Plays an important role in the bacterial defense system toward oxidative stress.</text>
</comment>
<comment type="subcellular location">
    <subcellularLocation>
        <location evidence="1">Cytoplasm</location>
    </subcellularLocation>
</comment>
<comment type="PTM">
    <text evidence="1">Under oxidizing conditions two disulfide bonds are formed involving the reactive cysteines. Under reducing conditions zinc is bound to the reactive cysteines and the protein is inactive.</text>
</comment>
<comment type="similarity">
    <text evidence="1">Belongs to the HSP33 family.</text>
</comment>
<comment type="sequence caution" evidence="2">
    <conflict type="erroneous initiation">
        <sequence resource="EMBL-CDS" id="AAL22360"/>
    </conflict>
</comment>
<dbReference type="EMBL" id="AE006468">
    <property type="protein sequence ID" value="AAL22360.1"/>
    <property type="status" value="ALT_INIT"/>
    <property type="molecule type" value="Genomic_DNA"/>
</dbReference>
<dbReference type="RefSeq" id="WP_000605785.1">
    <property type="nucleotide sequence ID" value="NC_003197.2"/>
</dbReference>
<dbReference type="SMR" id="Q8ZLJ4"/>
<dbReference type="STRING" id="99287.STM3498"/>
<dbReference type="PaxDb" id="99287-STM3498"/>
<dbReference type="KEGG" id="stm:STM3498"/>
<dbReference type="PATRIC" id="fig|99287.12.peg.3697"/>
<dbReference type="HOGENOM" id="CLU_054493_0_0_6"/>
<dbReference type="OMA" id="DMQCECC"/>
<dbReference type="PhylomeDB" id="Q8ZLJ4"/>
<dbReference type="Proteomes" id="UP000001014">
    <property type="component" value="Chromosome"/>
</dbReference>
<dbReference type="GO" id="GO:0005737">
    <property type="term" value="C:cytoplasm"/>
    <property type="evidence" value="ECO:0000318"/>
    <property type="project" value="GO_Central"/>
</dbReference>
<dbReference type="GO" id="GO:0044183">
    <property type="term" value="F:protein folding chaperone"/>
    <property type="evidence" value="ECO:0000318"/>
    <property type="project" value="GO_Central"/>
</dbReference>
<dbReference type="GO" id="GO:0051082">
    <property type="term" value="F:unfolded protein binding"/>
    <property type="evidence" value="ECO:0007669"/>
    <property type="project" value="UniProtKB-UniRule"/>
</dbReference>
<dbReference type="GO" id="GO:0042026">
    <property type="term" value="P:protein refolding"/>
    <property type="evidence" value="ECO:0000318"/>
    <property type="project" value="GO_Central"/>
</dbReference>
<dbReference type="CDD" id="cd00498">
    <property type="entry name" value="Hsp33"/>
    <property type="match status" value="1"/>
</dbReference>
<dbReference type="FunFam" id="3.55.30.10:FF:000001">
    <property type="entry name" value="33 kDa chaperonin"/>
    <property type="match status" value="1"/>
</dbReference>
<dbReference type="Gene3D" id="1.10.287.480">
    <property type="entry name" value="helix hairpin bin"/>
    <property type="match status" value="1"/>
</dbReference>
<dbReference type="Gene3D" id="3.55.30.10">
    <property type="entry name" value="Hsp33 domain"/>
    <property type="match status" value="1"/>
</dbReference>
<dbReference type="Gene3D" id="3.90.1280.10">
    <property type="entry name" value="HSP33 redox switch-like"/>
    <property type="match status" value="1"/>
</dbReference>
<dbReference type="HAMAP" id="MF_00117">
    <property type="entry name" value="HslO"/>
    <property type="match status" value="1"/>
</dbReference>
<dbReference type="InterPro" id="IPR000397">
    <property type="entry name" value="Heat_shock_Hsp33"/>
</dbReference>
<dbReference type="InterPro" id="IPR016154">
    <property type="entry name" value="Heat_shock_Hsp33_C"/>
</dbReference>
<dbReference type="InterPro" id="IPR016153">
    <property type="entry name" value="Heat_shock_Hsp33_N"/>
</dbReference>
<dbReference type="InterPro" id="IPR023212">
    <property type="entry name" value="Hsp33_helix_hairpin_bin_dom_sf"/>
</dbReference>
<dbReference type="NCBIfam" id="NF001033">
    <property type="entry name" value="PRK00114.1"/>
    <property type="match status" value="1"/>
</dbReference>
<dbReference type="PANTHER" id="PTHR30111">
    <property type="entry name" value="33 KDA CHAPERONIN"/>
    <property type="match status" value="1"/>
</dbReference>
<dbReference type="PANTHER" id="PTHR30111:SF1">
    <property type="entry name" value="33 KDA CHAPERONIN"/>
    <property type="match status" value="1"/>
</dbReference>
<dbReference type="Pfam" id="PF01430">
    <property type="entry name" value="HSP33"/>
    <property type="match status" value="1"/>
</dbReference>
<dbReference type="PIRSF" id="PIRSF005261">
    <property type="entry name" value="Heat_shock_Hsp33"/>
    <property type="match status" value="1"/>
</dbReference>
<dbReference type="SUPFAM" id="SSF64397">
    <property type="entry name" value="Hsp33 domain"/>
    <property type="match status" value="1"/>
</dbReference>
<dbReference type="SUPFAM" id="SSF118352">
    <property type="entry name" value="HSP33 redox switch-like"/>
    <property type="match status" value="1"/>
</dbReference>